<comment type="function">
    <text>Has broad nucleoside selectivity (uridine, adenosine and cytidine) and most likely functions to transport nucleosides across intracellular membranes.</text>
</comment>
<comment type="subcellular location">
    <subcellularLocation>
        <location evidence="4">Membrane</location>
        <topology evidence="4">Multi-pass membrane protein</topology>
    </subcellularLocation>
</comment>
<comment type="miscellaneous">
    <text evidence="3">Present with 217 molecules/cell in log phase SD medium.</text>
</comment>
<comment type="similarity">
    <text evidence="4">Belongs to the SLC29A/ENT transporter (TC 2.A.57) family.</text>
</comment>
<keyword id="KW-0472">Membrane</keyword>
<keyword id="KW-0597">Phosphoprotein</keyword>
<keyword id="KW-1185">Reference proteome</keyword>
<keyword id="KW-0812">Transmembrane</keyword>
<keyword id="KW-1133">Transmembrane helix</keyword>
<keyword id="KW-0813">Transport</keyword>
<feature type="chain" id="PRO_0000209346" description="Nucleoside transporter FUN26">
    <location>
        <begin position="1"/>
        <end position="517"/>
    </location>
</feature>
<feature type="transmembrane region" description="Helical" evidence="1">
    <location>
        <begin position="76"/>
        <end position="96"/>
    </location>
</feature>
<feature type="transmembrane region" description="Helical" evidence="1">
    <location>
        <begin position="116"/>
        <end position="136"/>
    </location>
</feature>
<feature type="transmembrane region" description="Helical" evidence="1">
    <location>
        <begin position="151"/>
        <end position="171"/>
    </location>
</feature>
<feature type="transmembrane region" description="Helical" evidence="1">
    <location>
        <begin position="174"/>
        <end position="194"/>
    </location>
</feature>
<feature type="transmembrane region" description="Helical" evidence="1">
    <location>
        <begin position="214"/>
        <end position="234"/>
    </location>
</feature>
<feature type="transmembrane region" description="Helical" evidence="1">
    <location>
        <begin position="243"/>
        <end position="263"/>
    </location>
</feature>
<feature type="transmembrane region" description="Helical" evidence="1">
    <location>
        <begin position="344"/>
        <end position="364"/>
    </location>
</feature>
<feature type="transmembrane region" description="Helical" evidence="1">
    <location>
        <begin position="367"/>
        <end position="387"/>
    </location>
</feature>
<feature type="transmembrane region" description="Helical" evidence="1">
    <location>
        <begin position="411"/>
        <end position="431"/>
    </location>
</feature>
<feature type="transmembrane region" description="Helical" evidence="1">
    <location>
        <begin position="446"/>
        <end position="466"/>
    </location>
</feature>
<feature type="transmembrane region" description="Helical" evidence="1">
    <location>
        <begin position="492"/>
        <end position="512"/>
    </location>
</feature>
<feature type="region of interest" description="Disordered" evidence="2">
    <location>
        <begin position="1"/>
        <end position="63"/>
    </location>
</feature>
<feature type="compositionally biased region" description="Basic and acidic residues" evidence="2">
    <location>
        <begin position="25"/>
        <end position="44"/>
    </location>
</feature>
<feature type="modified residue" description="Phosphoserine" evidence="5">
    <location>
        <position position="45"/>
    </location>
</feature>
<feature type="modified residue" description="Phosphoserine" evidence="5">
    <location>
        <position position="58"/>
    </location>
</feature>
<dbReference type="EMBL" id="L05146">
    <property type="protein sequence ID" value="AAC04935.1"/>
    <property type="molecule type" value="Genomic_DNA"/>
</dbReference>
<dbReference type="EMBL" id="BK006935">
    <property type="protein sequence ID" value="DAA06966.1"/>
    <property type="molecule type" value="Genomic_DNA"/>
</dbReference>
<dbReference type="PIR" id="S36712">
    <property type="entry name" value="S36712"/>
</dbReference>
<dbReference type="RefSeq" id="NP_009380.1">
    <property type="nucleotide sequence ID" value="NM_001178167.1"/>
</dbReference>
<dbReference type="SMR" id="P31381"/>
<dbReference type="BioGRID" id="31744">
    <property type="interactions" value="58"/>
</dbReference>
<dbReference type="DIP" id="DIP-5495N"/>
<dbReference type="FunCoup" id="P31381">
    <property type="interactions" value="363"/>
</dbReference>
<dbReference type="IntAct" id="P31381">
    <property type="interactions" value="6"/>
</dbReference>
<dbReference type="MINT" id="P31381"/>
<dbReference type="STRING" id="4932.YAL022C"/>
<dbReference type="TCDB" id="2.A.57.3.1">
    <property type="family name" value="the equilibrative nucleoside transporter (ent) family"/>
</dbReference>
<dbReference type="iPTMnet" id="P31381"/>
<dbReference type="PaxDb" id="4932-YAL022C"/>
<dbReference type="PeptideAtlas" id="P31381"/>
<dbReference type="EnsemblFungi" id="YAL022C_mRNA">
    <property type="protein sequence ID" value="YAL022C"/>
    <property type="gene ID" value="YAL022C"/>
</dbReference>
<dbReference type="GeneID" id="851211"/>
<dbReference type="KEGG" id="sce:YAL022C"/>
<dbReference type="AGR" id="SGD:S000000020"/>
<dbReference type="SGD" id="S000000020">
    <property type="gene designation" value="FUN26"/>
</dbReference>
<dbReference type="VEuPathDB" id="FungiDB:YAL022C"/>
<dbReference type="eggNOG" id="KOG1479">
    <property type="taxonomic scope" value="Eukaryota"/>
</dbReference>
<dbReference type="GeneTree" id="ENSGT00950000182898"/>
<dbReference type="HOGENOM" id="CLU_021611_3_0_1"/>
<dbReference type="InParanoid" id="P31381"/>
<dbReference type="OMA" id="GSPWTTK"/>
<dbReference type="OrthoDB" id="46396at2759"/>
<dbReference type="BioCyc" id="YEAST:G3O-28834-MONOMER"/>
<dbReference type="BioGRID-ORCS" id="851211">
    <property type="hits" value="2 hits in 10 CRISPR screens"/>
</dbReference>
<dbReference type="PRO" id="PR:P31381"/>
<dbReference type="Proteomes" id="UP000002311">
    <property type="component" value="Chromosome I"/>
</dbReference>
<dbReference type="RNAct" id="P31381">
    <property type="molecule type" value="protein"/>
</dbReference>
<dbReference type="GO" id="GO:0000329">
    <property type="term" value="C:fungal-type vacuole membrane"/>
    <property type="evidence" value="ECO:0000314"/>
    <property type="project" value="SGD"/>
</dbReference>
<dbReference type="GO" id="GO:0005886">
    <property type="term" value="C:plasma membrane"/>
    <property type="evidence" value="ECO:0000318"/>
    <property type="project" value="GO_Central"/>
</dbReference>
<dbReference type="GO" id="GO:0034257">
    <property type="term" value="F:nicotinamide riboside transmembrane transporter activity"/>
    <property type="evidence" value="ECO:0000315"/>
    <property type="project" value="SGD"/>
</dbReference>
<dbReference type="GO" id="GO:0015205">
    <property type="term" value="F:nucleobase transmembrane transporter activity"/>
    <property type="evidence" value="ECO:0000314"/>
    <property type="project" value="SGD"/>
</dbReference>
<dbReference type="GO" id="GO:0005337">
    <property type="term" value="F:nucleoside transmembrane transporter activity"/>
    <property type="evidence" value="ECO:0000314"/>
    <property type="project" value="SGD"/>
</dbReference>
<dbReference type="GO" id="GO:0034258">
    <property type="term" value="P:nicotinamide riboside transport"/>
    <property type="evidence" value="ECO:0000315"/>
    <property type="project" value="SGD"/>
</dbReference>
<dbReference type="GO" id="GO:0015851">
    <property type="term" value="P:nucleobase transport"/>
    <property type="evidence" value="ECO:0000314"/>
    <property type="project" value="SGD"/>
</dbReference>
<dbReference type="GO" id="GO:0015858">
    <property type="term" value="P:nucleoside transport"/>
    <property type="evidence" value="ECO:0000314"/>
    <property type="project" value="SGD"/>
</dbReference>
<dbReference type="GO" id="GO:0055085">
    <property type="term" value="P:transmembrane transport"/>
    <property type="evidence" value="ECO:0000314"/>
    <property type="project" value="SGD"/>
</dbReference>
<dbReference type="InterPro" id="IPR034764">
    <property type="entry name" value="ENT1/ENT2"/>
</dbReference>
<dbReference type="InterPro" id="IPR002259">
    <property type="entry name" value="Eqnu_transpt"/>
</dbReference>
<dbReference type="InterPro" id="IPR036259">
    <property type="entry name" value="MFS_trans_sf"/>
</dbReference>
<dbReference type="NCBIfam" id="TIGR00939">
    <property type="entry name" value="2a57"/>
    <property type="match status" value="1"/>
</dbReference>
<dbReference type="PANTHER" id="PTHR10332">
    <property type="entry name" value="EQUILIBRATIVE NUCLEOSIDE TRANSPORTER"/>
    <property type="match status" value="1"/>
</dbReference>
<dbReference type="PANTHER" id="PTHR10332:SF88">
    <property type="entry name" value="EQUILIBRATIVE NUCLEOSIDE TRANSPORTER 1, ISOFORM A"/>
    <property type="match status" value="1"/>
</dbReference>
<dbReference type="Pfam" id="PF01733">
    <property type="entry name" value="Nucleoside_tran"/>
    <property type="match status" value="1"/>
</dbReference>
<dbReference type="PIRSF" id="PIRSF016379">
    <property type="entry name" value="ENT"/>
    <property type="match status" value="1"/>
</dbReference>
<dbReference type="PRINTS" id="PR01130">
    <property type="entry name" value="DERENTRNSPRT"/>
</dbReference>
<dbReference type="SUPFAM" id="SSF103473">
    <property type="entry name" value="MFS general substrate transporter"/>
    <property type="match status" value="1"/>
</dbReference>
<sequence>MSTSADTDTIKKPILAVPEPALADTHSEEISRSGEEHESENNEHSDEEGDNYSEREQSVSTEPLDTLPLRKKLKNLSYITFFAIGIGLLWPWNCILSASQYFKHDIFKDTSIWAKIFTSSMMSFSTISSMLFNIYLAKRQYKYSRRVINGLVWEIIVFTVMCFFTILHFLLPKWFNFMFIMMLVVISSMGTAMTQNGIMAIANVFGSEYSQGVMVGQAVAGVLPSLVLFALAFIENSSVSTTGGILLYFFTTTLVVTICVVMFSVSKISRKVNENWNVEDGHITDVLLGSLRSNEEEIRIVGRIDQMEDEDHRRTNGTRDDNDEGEELQLKVPFEVLFAKLKYLVLSIFTTFVVTLVFPVFASATYVTGLPLSNAQYIPLIFTLWNLGDLYGRVIADWPMFRDQKFTPRKTFIYSLLRVAAIPLFLMFTAITSSSSGDEEHNGSVIVDLCYMLLQFLFGVTNGHVISMSFMKVPEQLDNDDEKEAAGGFTNIFVSTGLALGSIISYVFVFIIDFIIR</sequence>
<accession>P31381</accession>
<accession>D6VPJ6</accession>
<gene>
    <name type="primary">FUN26</name>
    <name type="ordered locus">YAL022C</name>
</gene>
<reference key="1">
    <citation type="journal article" date="1993" name="Genome">
        <title>Sequencing of chromosome I from Saccharomyces cerevisiae: analysis of a 32 kb region between the LTE1 and SPO7 genes.</title>
        <authorList>
            <person name="Ouellette B.F.F."/>
            <person name="Clark M.W."/>
            <person name="Keng T."/>
            <person name="Storms R.K."/>
            <person name="Zhong W.-W."/>
            <person name="Zeng B."/>
            <person name="Fortin N."/>
            <person name="Delaney S."/>
            <person name="Barton A.B."/>
            <person name="Kaback D.B."/>
            <person name="Bussey H."/>
        </authorList>
    </citation>
    <scope>NUCLEOTIDE SEQUENCE [GENOMIC DNA]</scope>
    <source>
        <strain>ATCC 204511 / S288c / AB972</strain>
    </source>
</reference>
<reference key="2">
    <citation type="journal article" date="1995" name="Proc. Natl. Acad. Sci. U.S.A.">
        <title>The nucleotide sequence of chromosome I from Saccharomyces cerevisiae.</title>
        <authorList>
            <person name="Bussey H."/>
            <person name="Kaback D.B."/>
            <person name="Zhong W.-W."/>
            <person name="Vo D.H."/>
            <person name="Clark M.W."/>
            <person name="Fortin N."/>
            <person name="Hall J."/>
            <person name="Ouellette B.F.F."/>
            <person name="Keng T."/>
            <person name="Barton A.B."/>
            <person name="Su Y."/>
            <person name="Davies C.J."/>
            <person name="Storms R.K."/>
        </authorList>
    </citation>
    <scope>NUCLEOTIDE SEQUENCE [LARGE SCALE GENOMIC DNA]</scope>
    <source>
        <strain>ATCC 204508 / S288c</strain>
    </source>
</reference>
<reference key="3">
    <citation type="journal article" date="2014" name="G3 (Bethesda)">
        <title>The reference genome sequence of Saccharomyces cerevisiae: Then and now.</title>
        <authorList>
            <person name="Engel S.R."/>
            <person name="Dietrich F.S."/>
            <person name="Fisk D.G."/>
            <person name="Binkley G."/>
            <person name="Balakrishnan R."/>
            <person name="Costanzo M.C."/>
            <person name="Dwight S.S."/>
            <person name="Hitz B.C."/>
            <person name="Karra K."/>
            <person name="Nash R.S."/>
            <person name="Weng S."/>
            <person name="Wong E.D."/>
            <person name="Lloyd P."/>
            <person name="Skrzypek M.S."/>
            <person name="Miyasato S.R."/>
            <person name="Simison M."/>
            <person name="Cherry J.M."/>
        </authorList>
    </citation>
    <scope>GENOME REANNOTATION</scope>
    <source>
        <strain>ATCC 204508 / S288c</strain>
    </source>
</reference>
<reference key="4">
    <citation type="journal article" date="2000" name="J. Biol. Chem.">
        <title>Nucleoside transporter proteins of Saccharomyces cerevisiae. Demonstration of a transporter (FUI1) with high uridine selectivity in plasma membranes and a transporter (FUN26) with broad nucleoside selectivity in intracellular membranes.</title>
        <authorList>
            <person name="Vickers M.F."/>
            <person name="Yao S.Y."/>
            <person name="Baldwin S.A."/>
            <person name="Young J.D."/>
            <person name="Cass C.E."/>
        </authorList>
    </citation>
    <scope>CHARACTERIZATION</scope>
</reference>
<reference key="5">
    <citation type="journal article" date="2003" name="Nature">
        <title>Global analysis of protein expression in yeast.</title>
        <authorList>
            <person name="Ghaemmaghami S."/>
            <person name="Huh W.-K."/>
            <person name="Bower K."/>
            <person name="Howson R.W."/>
            <person name="Belle A."/>
            <person name="Dephoure N."/>
            <person name="O'Shea E.K."/>
            <person name="Weissman J.S."/>
        </authorList>
    </citation>
    <scope>LEVEL OF PROTEIN EXPRESSION [LARGE SCALE ANALYSIS]</scope>
</reference>
<reference key="6">
    <citation type="journal article" date="2007" name="J. Proteome Res.">
        <title>Large-scale phosphorylation analysis of alpha-factor-arrested Saccharomyces cerevisiae.</title>
        <authorList>
            <person name="Li X."/>
            <person name="Gerber S.A."/>
            <person name="Rudner A.D."/>
            <person name="Beausoleil S.A."/>
            <person name="Haas W."/>
            <person name="Villen J."/>
            <person name="Elias J.E."/>
            <person name="Gygi S.P."/>
        </authorList>
    </citation>
    <scope>IDENTIFICATION BY MASS SPECTROMETRY [LARGE SCALE ANALYSIS]</scope>
    <source>
        <strain>ADR376</strain>
    </source>
</reference>
<reference key="7">
    <citation type="journal article" date="2009" name="Science">
        <title>Global analysis of Cdk1 substrate phosphorylation sites provides insights into evolution.</title>
        <authorList>
            <person name="Holt L.J."/>
            <person name="Tuch B.B."/>
            <person name="Villen J."/>
            <person name="Johnson A.D."/>
            <person name="Gygi S.P."/>
            <person name="Morgan D.O."/>
        </authorList>
    </citation>
    <scope>PHOSPHORYLATION [LARGE SCALE ANALYSIS] AT SER-45 AND SER-58</scope>
    <scope>IDENTIFICATION BY MASS SPECTROMETRY [LARGE SCALE ANALYSIS]</scope>
</reference>
<organism>
    <name type="scientific">Saccharomyces cerevisiae (strain ATCC 204508 / S288c)</name>
    <name type="common">Baker's yeast</name>
    <dbReference type="NCBI Taxonomy" id="559292"/>
    <lineage>
        <taxon>Eukaryota</taxon>
        <taxon>Fungi</taxon>
        <taxon>Dikarya</taxon>
        <taxon>Ascomycota</taxon>
        <taxon>Saccharomycotina</taxon>
        <taxon>Saccharomycetes</taxon>
        <taxon>Saccharomycetales</taxon>
        <taxon>Saccharomycetaceae</taxon>
        <taxon>Saccharomyces</taxon>
    </lineage>
</organism>
<evidence type="ECO:0000255" key="1"/>
<evidence type="ECO:0000256" key="2">
    <source>
        <dbReference type="SAM" id="MobiDB-lite"/>
    </source>
</evidence>
<evidence type="ECO:0000269" key="3">
    <source>
    </source>
</evidence>
<evidence type="ECO:0000305" key="4"/>
<evidence type="ECO:0007744" key="5">
    <source>
    </source>
</evidence>
<protein>
    <recommendedName>
        <fullName>Nucleoside transporter FUN26</fullName>
    </recommendedName>
</protein>
<proteinExistence type="evidence at protein level"/>
<name>FUN26_YEAST</name>